<accession>A3MXQ6</accession>
<gene>
    <name evidence="1" type="primary">psmB2</name>
    <name type="ordered locus">Pcal_2008</name>
</gene>
<name>PSB2_PYRCJ</name>
<comment type="function">
    <text evidence="1">Component of the proteasome core, a large protease complex with broad specificity involved in protein degradation.</text>
</comment>
<comment type="catalytic activity">
    <reaction evidence="1">
        <text>Cleavage of peptide bonds with very broad specificity.</text>
        <dbReference type="EC" id="3.4.25.1"/>
    </reaction>
</comment>
<comment type="activity regulation">
    <text evidence="1">The formation of the proteasomal ATPase PAN-20S proteasome complex, via the docking of the C-termini of PAN into the intersubunit pockets in the alpha-rings, triggers opening of the gate for substrate entry. Interconversion between the open-gate and close-gate conformations leads to a dynamic regulation of the 20S proteasome proteolysis activity.</text>
</comment>
<comment type="subunit">
    <text evidence="1">The 20S proteasome core is composed of 14 alpha and 14 beta subunits that assemble into four stacked heptameric rings, resulting in a barrel-shaped structure. The two inner rings, each composed of seven catalytic beta subunits, are sandwiched by two outer rings, each composed of seven alpha subunits. The catalytic chamber with the active sites is on the inside of the barrel. Has a gated structure, the ends of the cylinder being occluded by the N-termini of the alpha-subunits. Is capped at one or both ends by the proteasome regulatory ATPase, PAN.</text>
</comment>
<comment type="subcellular location">
    <subcellularLocation>
        <location evidence="1">Cytoplasm</location>
    </subcellularLocation>
</comment>
<comment type="similarity">
    <text evidence="1">Belongs to the peptidase T1B family.</text>
</comment>
<sequence length="203" mass="21690">MGEEVSIGATAVGIKTKEGVVLAAEKRVSYGFYTLSTAGKKVFIVNDRLAIASAGIIADMQTLAKILKLNAKAYELEMKRKPSVHAMAKLLSVVMFSRRFMPFFAEVLVGGIDDEGPHLIVMDPLGSLIEDNYAALGTGAKLAIAIIDASYKPDMSLQDAKKLAVQALKAALERDPVSGGGIDLVVIDKNGAREEEVKLQVLI</sequence>
<protein>
    <recommendedName>
        <fullName evidence="1">Proteasome subunit beta 2</fullName>
        <ecNumber evidence="1">3.4.25.1</ecNumber>
    </recommendedName>
    <alternativeName>
        <fullName evidence="1">20S proteasome beta subunit 2</fullName>
    </alternativeName>
    <alternativeName>
        <fullName evidence="1">Proteasome core protein PsmB 2</fullName>
    </alternativeName>
</protein>
<proteinExistence type="inferred from homology"/>
<reference key="1">
    <citation type="submission" date="2007-02" db="EMBL/GenBank/DDBJ databases">
        <title>Complete sequence of Pyrobaculum calidifontis JCM 11548.</title>
        <authorList>
            <consortium name="US DOE Joint Genome Institute"/>
            <person name="Copeland A."/>
            <person name="Lucas S."/>
            <person name="Lapidus A."/>
            <person name="Barry K."/>
            <person name="Glavina del Rio T."/>
            <person name="Dalin E."/>
            <person name="Tice H."/>
            <person name="Pitluck S."/>
            <person name="Chain P."/>
            <person name="Malfatti S."/>
            <person name="Shin M."/>
            <person name="Vergez L."/>
            <person name="Schmutz J."/>
            <person name="Larimer F."/>
            <person name="Land M."/>
            <person name="Hauser L."/>
            <person name="Kyrpides N."/>
            <person name="Mikhailova N."/>
            <person name="Cozen A.E."/>
            <person name="Fitz-Gibbon S.T."/>
            <person name="House C.H."/>
            <person name="Saltikov C."/>
            <person name="Lowe T.M."/>
            <person name="Richardson P."/>
        </authorList>
    </citation>
    <scope>NUCLEOTIDE SEQUENCE [LARGE SCALE GENOMIC DNA]</scope>
    <source>
        <strain>DSM 21063 / JCM 11548 / VA1</strain>
    </source>
</reference>
<keyword id="KW-0068">Autocatalytic cleavage</keyword>
<keyword id="KW-0963">Cytoplasm</keyword>
<keyword id="KW-0378">Hydrolase</keyword>
<keyword id="KW-0645">Protease</keyword>
<keyword id="KW-0647">Proteasome</keyword>
<keyword id="KW-0888">Threonine protease</keyword>
<keyword id="KW-0865">Zymogen</keyword>
<feature type="propeptide" id="PRO_0000397402" description="Removed in mature form; by autocatalysis" evidence="1">
    <location>
        <begin position="1"/>
        <end position="9"/>
    </location>
</feature>
<feature type="chain" id="PRO_0000397403" description="Proteasome subunit beta 2">
    <location>
        <begin position="10"/>
        <end position="203"/>
    </location>
</feature>
<feature type="active site" description="Nucleophile" evidence="1">
    <location>
        <position position="10"/>
    </location>
</feature>
<dbReference type="EC" id="3.4.25.1" evidence="1"/>
<dbReference type="EMBL" id="CP000561">
    <property type="protein sequence ID" value="ABO09423.1"/>
    <property type="molecule type" value="Genomic_DNA"/>
</dbReference>
<dbReference type="RefSeq" id="WP_011850681.1">
    <property type="nucleotide sequence ID" value="NC_009073.1"/>
</dbReference>
<dbReference type="SMR" id="A3MXQ6"/>
<dbReference type="STRING" id="410359.Pcal_2008"/>
<dbReference type="GeneID" id="4908439"/>
<dbReference type="KEGG" id="pcl:Pcal_2008"/>
<dbReference type="eggNOG" id="arCOG00970">
    <property type="taxonomic scope" value="Archaea"/>
</dbReference>
<dbReference type="HOGENOM" id="CLU_035750_7_2_2"/>
<dbReference type="OrthoDB" id="6330at2157"/>
<dbReference type="Proteomes" id="UP000001431">
    <property type="component" value="Chromosome"/>
</dbReference>
<dbReference type="GO" id="GO:0005737">
    <property type="term" value="C:cytoplasm"/>
    <property type="evidence" value="ECO:0007669"/>
    <property type="project" value="UniProtKB-SubCell"/>
</dbReference>
<dbReference type="GO" id="GO:0019774">
    <property type="term" value="C:proteasome core complex, beta-subunit complex"/>
    <property type="evidence" value="ECO:0007669"/>
    <property type="project" value="UniProtKB-UniRule"/>
</dbReference>
<dbReference type="GO" id="GO:0004298">
    <property type="term" value="F:threonine-type endopeptidase activity"/>
    <property type="evidence" value="ECO:0007669"/>
    <property type="project" value="UniProtKB-UniRule"/>
</dbReference>
<dbReference type="GO" id="GO:0010498">
    <property type="term" value="P:proteasomal protein catabolic process"/>
    <property type="evidence" value="ECO:0007669"/>
    <property type="project" value="UniProtKB-UniRule"/>
</dbReference>
<dbReference type="Gene3D" id="3.60.20.10">
    <property type="entry name" value="Glutamine Phosphoribosylpyrophosphate, subunit 1, domain 1"/>
    <property type="match status" value="1"/>
</dbReference>
<dbReference type="HAMAP" id="MF_02113_A">
    <property type="entry name" value="Proteasome_B_A"/>
    <property type="match status" value="1"/>
</dbReference>
<dbReference type="InterPro" id="IPR029055">
    <property type="entry name" value="Ntn_hydrolases_N"/>
</dbReference>
<dbReference type="InterPro" id="IPR019983">
    <property type="entry name" value="Pept_T1A_Psome_bsu_arc"/>
</dbReference>
<dbReference type="InterPro" id="IPR000243">
    <property type="entry name" value="Pept_T1A_subB"/>
</dbReference>
<dbReference type="InterPro" id="IPR001353">
    <property type="entry name" value="Proteasome_sua/b"/>
</dbReference>
<dbReference type="InterPro" id="IPR023333">
    <property type="entry name" value="Proteasome_suB-type"/>
</dbReference>
<dbReference type="NCBIfam" id="TIGR03634">
    <property type="entry name" value="arc_protsome_B"/>
    <property type="match status" value="1"/>
</dbReference>
<dbReference type="PANTHER" id="PTHR32194:SF0">
    <property type="entry name" value="ATP-DEPENDENT PROTEASE SUBUNIT HSLV"/>
    <property type="match status" value="1"/>
</dbReference>
<dbReference type="PANTHER" id="PTHR32194">
    <property type="entry name" value="METALLOPROTEASE TLDD"/>
    <property type="match status" value="1"/>
</dbReference>
<dbReference type="Pfam" id="PF00227">
    <property type="entry name" value="Proteasome"/>
    <property type="match status" value="1"/>
</dbReference>
<dbReference type="PRINTS" id="PR00141">
    <property type="entry name" value="PROTEASOME"/>
</dbReference>
<dbReference type="SUPFAM" id="SSF56235">
    <property type="entry name" value="N-terminal nucleophile aminohydrolases (Ntn hydrolases)"/>
    <property type="match status" value="1"/>
</dbReference>
<dbReference type="PROSITE" id="PS51476">
    <property type="entry name" value="PROTEASOME_BETA_2"/>
    <property type="match status" value="1"/>
</dbReference>
<evidence type="ECO:0000255" key="1">
    <source>
        <dbReference type="HAMAP-Rule" id="MF_02113"/>
    </source>
</evidence>
<organism>
    <name type="scientific">Pyrobaculum calidifontis (strain DSM 21063 / JCM 11548 / VA1)</name>
    <dbReference type="NCBI Taxonomy" id="410359"/>
    <lineage>
        <taxon>Archaea</taxon>
        <taxon>Thermoproteota</taxon>
        <taxon>Thermoprotei</taxon>
        <taxon>Thermoproteales</taxon>
        <taxon>Thermoproteaceae</taxon>
        <taxon>Pyrobaculum</taxon>
    </lineage>
</organism>